<proteinExistence type="inferred from homology"/>
<feature type="chain" id="PRO_0000272341" description="Acetate kinase">
    <location>
        <begin position="1"/>
        <end position="385"/>
    </location>
</feature>
<feature type="active site" description="Proton donor/acceptor" evidence="1">
    <location>
        <position position="144"/>
    </location>
</feature>
<feature type="binding site" evidence="1">
    <location>
        <position position="9"/>
    </location>
    <ligand>
        <name>Mg(2+)</name>
        <dbReference type="ChEBI" id="CHEBI:18420"/>
    </ligand>
</feature>
<feature type="binding site" evidence="1">
    <location>
        <position position="16"/>
    </location>
    <ligand>
        <name>ATP</name>
        <dbReference type="ChEBI" id="CHEBI:30616"/>
    </ligand>
</feature>
<feature type="binding site" evidence="1">
    <location>
        <position position="87"/>
    </location>
    <ligand>
        <name>substrate</name>
    </ligand>
</feature>
<feature type="binding site" evidence="1">
    <location>
        <begin position="202"/>
        <end position="206"/>
    </location>
    <ligand>
        <name>ATP</name>
        <dbReference type="ChEBI" id="CHEBI:30616"/>
    </ligand>
</feature>
<feature type="binding site" evidence="1">
    <location>
        <begin position="277"/>
        <end position="279"/>
    </location>
    <ligand>
        <name>ATP</name>
        <dbReference type="ChEBI" id="CHEBI:30616"/>
    </ligand>
</feature>
<feature type="binding site" evidence="1">
    <location>
        <position position="373"/>
    </location>
    <ligand>
        <name>Mg(2+)</name>
        <dbReference type="ChEBI" id="CHEBI:18420"/>
    </ligand>
</feature>
<feature type="site" description="Transition state stabilizer" evidence="1">
    <location>
        <position position="175"/>
    </location>
</feature>
<feature type="site" description="Transition state stabilizer" evidence="1">
    <location>
        <position position="235"/>
    </location>
</feature>
<protein>
    <recommendedName>
        <fullName evidence="1">Acetate kinase</fullName>
        <ecNumber evidence="1">2.7.2.1</ecNumber>
    </recommendedName>
    <alternativeName>
        <fullName evidence="1">Acetokinase</fullName>
    </alternativeName>
</protein>
<gene>
    <name evidence="1" type="primary">ackA</name>
    <name type="ordered locus">RF_0097</name>
</gene>
<accession>Q4UNB0</accession>
<name>ACKA_RICFE</name>
<keyword id="KW-0067">ATP-binding</keyword>
<keyword id="KW-0963">Cytoplasm</keyword>
<keyword id="KW-0418">Kinase</keyword>
<keyword id="KW-0460">Magnesium</keyword>
<keyword id="KW-0479">Metal-binding</keyword>
<keyword id="KW-0547">Nucleotide-binding</keyword>
<keyword id="KW-0808">Transferase</keyword>
<dbReference type="EC" id="2.7.2.1" evidence="1"/>
<dbReference type="EMBL" id="CP000053">
    <property type="protein sequence ID" value="AAY60948.1"/>
    <property type="status" value="ALT_INIT"/>
    <property type="molecule type" value="Genomic_DNA"/>
</dbReference>
<dbReference type="SMR" id="Q4UNB0"/>
<dbReference type="STRING" id="315456.RF_0097"/>
<dbReference type="KEGG" id="rfe:RF_0097"/>
<dbReference type="eggNOG" id="COG0282">
    <property type="taxonomic scope" value="Bacteria"/>
</dbReference>
<dbReference type="HOGENOM" id="CLU_020352_0_0_5"/>
<dbReference type="OrthoDB" id="9802453at2"/>
<dbReference type="UniPathway" id="UPA00340">
    <property type="reaction ID" value="UER00458"/>
</dbReference>
<dbReference type="Proteomes" id="UP000008548">
    <property type="component" value="Chromosome"/>
</dbReference>
<dbReference type="GO" id="GO:0005737">
    <property type="term" value="C:cytoplasm"/>
    <property type="evidence" value="ECO:0007669"/>
    <property type="project" value="UniProtKB-SubCell"/>
</dbReference>
<dbReference type="GO" id="GO:0008776">
    <property type="term" value="F:acetate kinase activity"/>
    <property type="evidence" value="ECO:0007669"/>
    <property type="project" value="UniProtKB-UniRule"/>
</dbReference>
<dbReference type="GO" id="GO:0005524">
    <property type="term" value="F:ATP binding"/>
    <property type="evidence" value="ECO:0007669"/>
    <property type="project" value="UniProtKB-KW"/>
</dbReference>
<dbReference type="GO" id="GO:0000287">
    <property type="term" value="F:magnesium ion binding"/>
    <property type="evidence" value="ECO:0007669"/>
    <property type="project" value="UniProtKB-UniRule"/>
</dbReference>
<dbReference type="GO" id="GO:0006083">
    <property type="term" value="P:acetate metabolic process"/>
    <property type="evidence" value="ECO:0007669"/>
    <property type="project" value="TreeGrafter"/>
</dbReference>
<dbReference type="GO" id="GO:0006085">
    <property type="term" value="P:acetyl-CoA biosynthetic process"/>
    <property type="evidence" value="ECO:0007669"/>
    <property type="project" value="UniProtKB-UniRule"/>
</dbReference>
<dbReference type="Gene3D" id="3.30.420.40">
    <property type="match status" value="2"/>
</dbReference>
<dbReference type="HAMAP" id="MF_00020">
    <property type="entry name" value="Acetate_kinase"/>
    <property type="match status" value="1"/>
</dbReference>
<dbReference type="InterPro" id="IPR004372">
    <property type="entry name" value="Ac/propionate_kinase"/>
</dbReference>
<dbReference type="InterPro" id="IPR000890">
    <property type="entry name" value="Aliphatic_acid_kin_short-chain"/>
</dbReference>
<dbReference type="InterPro" id="IPR023865">
    <property type="entry name" value="Aliphatic_acid_kinase_CS"/>
</dbReference>
<dbReference type="InterPro" id="IPR043129">
    <property type="entry name" value="ATPase_NBD"/>
</dbReference>
<dbReference type="NCBIfam" id="TIGR00016">
    <property type="entry name" value="ackA"/>
    <property type="match status" value="1"/>
</dbReference>
<dbReference type="PANTHER" id="PTHR21060">
    <property type="entry name" value="ACETATE KINASE"/>
    <property type="match status" value="1"/>
</dbReference>
<dbReference type="PANTHER" id="PTHR21060:SF15">
    <property type="entry name" value="ACETATE KINASE-RELATED"/>
    <property type="match status" value="1"/>
</dbReference>
<dbReference type="Pfam" id="PF00871">
    <property type="entry name" value="Acetate_kinase"/>
    <property type="match status" value="1"/>
</dbReference>
<dbReference type="PIRSF" id="PIRSF000722">
    <property type="entry name" value="Acetate_prop_kin"/>
    <property type="match status" value="1"/>
</dbReference>
<dbReference type="PRINTS" id="PR00471">
    <property type="entry name" value="ACETATEKNASE"/>
</dbReference>
<dbReference type="SUPFAM" id="SSF53067">
    <property type="entry name" value="Actin-like ATPase domain"/>
    <property type="match status" value="2"/>
</dbReference>
<dbReference type="PROSITE" id="PS01075">
    <property type="entry name" value="ACETATE_KINASE_1"/>
    <property type="match status" value="1"/>
</dbReference>
<dbReference type="PROSITE" id="PS01076">
    <property type="entry name" value="ACETATE_KINASE_2"/>
    <property type="match status" value="1"/>
</dbReference>
<evidence type="ECO:0000255" key="1">
    <source>
        <dbReference type="HAMAP-Rule" id="MF_00020"/>
    </source>
</evidence>
<evidence type="ECO:0000305" key="2"/>
<comment type="function">
    <text evidence="1">Catalyzes the formation of acetyl phosphate from acetate and ATP. Can also catalyze the reverse reaction.</text>
</comment>
<comment type="catalytic activity">
    <reaction evidence="1">
        <text>acetate + ATP = acetyl phosphate + ADP</text>
        <dbReference type="Rhea" id="RHEA:11352"/>
        <dbReference type="ChEBI" id="CHEBI:22191"/>
        <dbReference type="ChEBI" id="CHEBI:30089"/>
        <dbReference type="ChEBI" id="CHEBI:30616"/>
        <dbReference type="ChEBI" id="CHEBI:456216"/>
        <dbReference type="EC" id="2.7.2.1"/>
    </reaction>
</comment>
<comment type="cofactor">
    <cofactor evidence="1">
        <name>Mg(2+)</name>
        <dbReference type="ChEBI" id="CHEBI:18420"/>
    </cofactor>
    <cofactor evidence="1">
        <name>Mn(2+)</name>
        <dbReference type="ChEBI" id="CHEBI:29035"/>
    </cofactor>
    <text evidence="1">Mg(2+). Can also accept Mn(2+).</text>
</comment>
<comment type="pathway">
    <text evidence="1">Metabolic intermediate biosynthesis; acetyl-CoA biosynthesis; acetyl-CoA from acetate: step 1/2.</text>
</comment>
<comment type="subunit">
    <text evidence="1">Homodimer.</text>
</comment>
<comment type="subcellular location">
    <subcellularLocation>
        <location evidence="1">Cytoplasm</location>
    </subcellularLocation>
</comment>
<comment type="similarity">
    <text evidence="1">Belongs to the acetokinase family.</text>
</comment>
<comment type="sequence caution" evidence="2">
    <conflict type="erroneous initiation">
        <sequence resource="EMBL-CDS" id="AAY60948"/>
    </conflict>
</comment>
<sequence>MKDVILIANAGSSSLKISIFEIQNKKVKDKIYNIFLEKNVNKILFHINKKQESATDIKDDAIEMMIDLFEDWWKKQENLNLIATGHRIVHGGKNFNKPVIVYEKVSKDLTVLIPLSPLHQPYNLQVLDLFLQKYKEISHIACFDTSFHFTNPPITKAFGLPKKYYDKGIIRYGFHGLSYKYVSSHFKEMTKEDLPTKTIIAHLGSGSSLCAIKNGLSLTSSMGFSVLDGVMMGTRTGNLDPGVVLYLIDHEKMTTKEVTELLYKKSGLLGMSGESSDMRTLLASNSPDAKFAIDLFVYRIVLEIGKLTAALEGVDCLIFTAGVGQNSAVIRKMITEKLLWLGIKIDDTKNQKNEHLISTSDSKVKVFAVPTNEELIIAEEVMKFL</sequence>
<reference key="1">
    <citation type="journal article" date="2005" name="PLoS Biol.">
        <title>The genome sequence of Rickettsia felis identifies the first putative conjugative plasmid in an obligate intracellular parasite.</title>
        <authorList>
            <person name="Ogata H."/>
            <person name="Renesto P."/>
            <person name="Audic S."/>
            <person name="Robert C."/>
            <person name="Blanc G."/>
            <person name="Fournier P.-E."/>
            <person name="Parinello H."/>
            <person name="Claverie J.-M."/>
            <person name="Raoult D."/>
        </authorList>
    </citation>
    <scope>NUCLEOTIDE SEQUENCE [LARGE SCALE GENOMIC DNA]</scope>
    <source>
        <strain>ATCC VR-1525 / URRWXCal2</strain>
    </source>
</reference>
<organism>
    <name type="scientific">Rickettsia felis (strain ATCC VR-1525 / URRWXCal2)</name>
    <name type="common">Rickettsia azadi</name>
    <dbReference type="NCBI Taxonomy" id="315456"/>
    <lineage>
        <taxon>Bacteria</taxon>
        <taxon>Pseudomonadati</taxon>
        <taxon>Pseudomonadota</taxon>
        <taxon>Alphaproteobacteria</taxon>
        <taxon>Rickettsiales</taxon>
        <taxon>Rickettsiaceae</taxon>
        <taxon>Rickettsieae</taxon>
        <taxon>Rickettsia</taxon>
        <taxon>spotted fever group</taxon>
    </lineage>
</organism>